<name>CCNC_XENLA</name>
<comment type="function">
    <text evidence="1">Component of the Mediator complex, a coactivator involved in regulated gene transcription of nearly all RNA polymerase II-dependent genes. Mediator functions as a bridge to convey information from gene-specific regulatory proteins to the basal RNA polymerase II transcription machinery. Mediator is recruited to promoters by direct interactions with regulatory proteins and serves as a scaffold for the assembly of a functional preinitiation complex with RNA polymerase II and the general transcription factors. Binds to and activates cyclin-dependent kinase cdk8 that phosphorylates the CTD (C-terminal domain) of the large subunit of RNA polymerase II (RNAp II), which may inhibit the formation of a transcription initiation complex (By similarity).</text>
</comment>
<comment type="subunit">
    <text evidence="1">Component of the Mediator complex. The cylin/CDK pair formed by ccnc/cdk8 also associates with the large subunit of RNA polymerase II (By similarity).</text>
</comment>
<comment type="subcellular location">
    <subcellularLocation>
        <location evidence="3">Nucleus</location>
    </subcellularLocation>
</comment>
<comment type="similarity">
    <text evidence="3">Belongs to the cyclin family. Cyclin C subfamily.</text>
</comment>
<sequence>MAGNFWQSSHYLQWILDKQDLLKERQKDLKFLSEEEYWKLQIFFTNVIQALGEHLKLRQQVIATATVYFKRFYARYSLKSIDPVLMAPTCVFLASKVEEFGVVSNTRLISAATSVLKTRFSYAFPKEFPYRMNHILECEFYLLELMDCCLIVYHPYRPLLQYVQDMGQEDMLLPLAWRIVNDTYRTDLCLLYPPFMIALACLHVACVVQQKDARQWFAELSVDMEKILEIIRVILKLYEQWKNFDERKEMASILSKMPKPKPPPNSDGEQGTNGSQSSGYSQS</sequence>
<accession>Q4KLA0</accession>
<proteinExistence type="evidence at transcript level"/>
<dbReference type="EMBL" id="BC099287">
    <property type="protein sequence ID" value="AAH99287.1"/>
    <property type="molecule type" value="mRNA"/>
</dbReference>
<dbReference type="EMBL" id="BC099330">
    <property type="protein sequence ID" value="AAH99330.1"/>
    <property type="molecule type" value="mRNA"/>
</dbReference>
<dbReference type="RefSeq" id="NP_001089618.1">
    <property type="nucleotide sequence ID" value="NM_001096149.1"/>
</dbReference>
<dbReference type="SMR" id="Q4KLA0"/>
<dbReference type="DNASU" id="734677"/>
<dbReference type="GeneID" id="734677"/>
<dbReference type="KEGG" id="xla:734677"/>
<dbReference type="AGR" id="Xenbase:XB-GENE-922018"/>
<dbReference type="CTD" id="734677"/>
<dbReference type="Xenbase" id="XB-GENE-922018">
    <property type="gene designation" value="ccnc.L"/>
</dbReference>
<dbReference type="OMA" id="CLLHPPH"/>
<dbReference type="OrthoDB" id="10266018at2759"/>
<dbReference type="Proteomes" id="UP000186698">
    <property type="component" value="Chromosome 5L"/>
</dbReference>
<dbReference type="Bgee" id="734677">
    <property type="expression patterns" value="Expressed in ovary and 19 other cell types or tissues"/>
</dbReference>
<dbReference type="GO" id="GO:0016592">
    <property type="term" value="C:mediator complex"/>
    <property type="evidence" value="ECO:0000318"/>
    <property type="project" value="GO_Central"/>
</dbReference>
<dbReference type="GO" id="GO:0005634">
    <property type="term" value="C:nucleus"/>
    <property type="evidence" value="ECO:0000318"/>
    <property type="project" value="GO_Central"/>
</dbReference>
<dbReference type="GO" id="GO:0016538">
    <property type="term" value="F:cyclin-dependent protein serine/threonine kinase regulator activity"/>
    <property type="evidence" value="ECO:0000318"/>
    <property type="project" value="GO_Central"/>
</dbReference>
<dbReference type="GO" id="GO:0045944">
    <property type="term" value="P:positive regulation of transcription by RNA polymerase II"/>
    <property type="evidence" value="ECO:0000318"/>
    <property type="project" value="GO_Central"/>
</dbReference>
<dbReference type="CDD" id="cd20513">
    <property type="entry name" value="CYCLIN_CCNC_rpt1"/>
    <property type="match status" value="1"/>
</dbReference>
<dbReference type="CDD" id="cd20514">
    <property type="entry name" value="CYCLIN_CCNC_rpt2"/>
    <property type="match status" value="1"/>
</dbReference>
<dbReference type="FunFam" id="1.10.472.10:FF:000015">
    <property type="entry name" value="Putative cyclin-c"/>
    <property type="match status" value="1"/>
</dbReference>
<dbReference type="Gene3D" id="1.10.472.10">
    <property type="entry name" value="Cyclin-like"/>
    <property type="match status" value="2"/>
</dbReference>
<dbReference type="InterPro" id="IPR013763">
    <property type="entry name" value="Cyclin-like_dom"/>
</dbReference>
<dbReference type="InterPro" id="IPR036915">
    <property type="entry name" value="Cyclin-like_sf"/>
</dbReference>
<dbReference type="InterPro" id="IPR043198">
    <property type="entry name" value="Cyclin/Ssn8"/>
</dbReference>
<dbReference type="InterPro" id="IPR031658">
    <property type="entry name" value="Cyclin_C_2"/>
</dbReference>
<dbReference type="InterPro" id="IPR006671">
    <property type="entry name" value="Cyclin_N"/>
</dbReference>
<dbReference type="PANTHER" id="PTHR10026">
    <property type="entry name" value="CYCLIN"/>
    <property type="match status" value="1"/>
</dbReference>
<dbReference type="Pfam" id="PF16899">
    <property type="entry name" value="Cyclin_C_2"/>
    <property type="match status" value="1"/>
</dbReference>
<dbReference type="Pfam" id="PF00134">
    <property type="entry name" value="Cyclin_N"/>
    <property type="match status" value="1"/>
</dbReference>
<dbReference type="PIRSF" id="PIRSF028758">
    <property type="entry name" value="Cyclin, C/H/G types"/>
    <property type="match status" value="1"/>
</dbReference>
<dbReference type="SMART" id="SM00385">
    <property type="entry name" value="CYCLIN"/>
    <property type="match status" value="2"/>
</dbReference>
<dbReference type="SUPFAM" id="SSF47954">
    <property type="entry name" value="Cyclin-like"/>
    <property type="match status" value="2"/>
</dbReference>
<keyword id="KW-0010">Activator</keyword>
<keyword id="KW-0195">Cyclin</keyword>
<keyword id="KW-0539">Nucleus</keyword>
<keyword id="KW-1185">Reference proteome</keyword>
<keyword id="KW-0678">Repressor</keyword>
<keyword id="KW-0804">Transcription</keyword>
<keyword id="KW-0805">Transcription regulation</keyword>
<organism>
    <name type="scientific">Xenopus laevis</name>
    <name type="common">African clawed frog</name>
    <dbReference type="NCBI Taxonomy" id="8355"/>
    <lineage>
        <taxon>Eukaryota</taxon>
        <taxon>Metazoa</taxon>
        <taxon>Chordata</taxon>
        <taxon>Craniata</taxon>
        <taxon>Vertebrata</taxon>
        <taxon>Euteleostomi</taxon>
        <taxon>Amphibia</taxon>
        <taxon>Batrachia</taxon>
        <taxon>Anura</taxon>
        <taxon>Pipoidea</taxon>
        <taxon>Pipidae</taxon>
        <taxon>Xenopodinae</taxon>
        <taxon>Xenopus</taxon>
        <taxon>Xenopus</taxon>
    </lineage>
</organism>
<protein>
    <recommendedName>
        <fullName>Cyclin-C</fullName>
    </recommendedName>
</protein>
<reference key="1">
    <citation type="submission" date="2005-07" db="EMBL/GenBank/DDBJ databases">
        <authorList>
            <consortium name="NIH - Xenopus Gene Collection (XGC) project"/>
        </authorList>
    </citation>
    <scope>NUCLEOTIDE SEQUENCE [LARGE SCALE MRNA]</scope>
    <source>
        <tissue>Tadpole</tissue>
    </source>
</reference>
<evidence type="ECO:0000250" key="1"/>
<evidence type="ECO:0000256" key="2">
    <source>
        <dbReference type="SAM" id="MobiDB-lite"/>
    </source>
</evidence>
<evidence type="ECO:0000305" key="3"/>
<feature type="chain" id="PRO_0000314258" description="Cyclin-C">
    <location>
        <begin position="1"/>
        <end position="283"/>
    </location>
</feature>
<feature type="domain" description="Cyclin N-terminal">
    <location>
        <begin position="46"/>
        <end position="144"/>
    </location>
</feature>
<feature type="region of interest" description="Disordered" evidence="2">
    <location>
        <begin position="252"/>
        <end position="283"/>
    </location>
</feature>
<feature type="compositionally biased region" description="Polar residues" evidence="2">
    <location>
        <begin position="267"/>
        <end position="283"/>
    </location>
</feature>
<gene>
    <name type="primary">ccnc</name>
</gene>